<protein>
    <recommendedName>
        <fullName evidence="1">Latrophilin Cirl</fullName>
    </recommendedName>
</protein>
<name>LPHN_DROYA</name>
<proteinExistence type="inferred from homology"/>
<keyword id="KW-1003">Cell membrane</keyword>
<keyword id="KW-1015">Disulfide bond</keyword>
<keyword id="KW-0297">G-protein coupled receptor</keyword>
<keyword id="KW-0325">Glycoprotein</keyword>
<keyword id="KW-0430">Lectin</keyword>
<keyword id="KW-0472">Membrane</keyword>
<keyword id="KW-0597">Phosphoprotein</keyword>
<keyword id="KW-0675">Receptor</keyword>
<keyword id="KW-0807">Transducer</keyword>
<keyword id="KW-0812">Transmembrane</keyword>
<keyword id="KW-1133">Transmembrane helix</keyword>
<evidence type="ECO:0000250" key="1">
    <source>
        <dbReference type="UniProtKB" id="A1Z7G7"/>
    </source>
</evidence>
<evidence type="ECO:0000250" key="2">
    <source>
        <dbReference type="UniProtKB" id="O88923"/>
    </source>
</evidence>
<evidence type="ECO:0000255" key="3"/>
<evidence type="ECO:0000255" key="4">
    <source>
        <dbReference type="PROSITE-ProRule" id="PRU00098"/>
    </source>
</evidence>
<evidence type="ECO:0000255" key="5">
    <source>
        <dbReference type="PROSITE-ProRule" id="PRU00260"/>
    </source>
</evidence>
<evidence type="ECO:0000256" key="6">
    <source>
        <dbReference type="SAM" id="MobiDB-lite"/>
    </source>
</evidence>
<evidence type="ECO:0000312" key="7">
    <source>
        <dbReference type="EMBL" id="EDW89373.1"/>
    </source>
</evidence>
<accession>B4P3A0</accession>
<gene>
    <name evidence="1" type="primary">Cirl</name>
    <name type="ORF">GE19213</name>
</gene>
<organism>
    <name type="scientific">Drosophila yakuba</name>
    <name type="common">Fruit fly</name>
    <dbReference type="NCBI Taxonomy" id="7245"/>
    <lineage>
        <taxon>Eukaryota</taxon>
        <taxon>Metazoa</taxon>
        <taxon>Ecdysozoa</taxon>
        <taxon>Arthropoda</taxon>
        <taxon>Hexapoda</taxon>
        <taxon>Insecta</taxon>
        <taxon>Pterygota</taxon>
        <taxon>Neoptera</taxon>
        <taxon>Endopterygota</taxon>
        <taxon>Diptera</taxon>
        <taxon>Brachycera</taxon>
        <taxon>Muscomorpha</taxon>
        <taxon>Ephydroidea</taxon>
        <taxon>Drosophilidae</taxon>
        <taxon>Drosophila</taxon>
        <taxon>Sophophora</taxon>
    </lineage>
</organism>
<feature type="chain" id="PRO_0000393381" description="Latrophilin Cirl">
    <location>
        <begin position="1"/>
        <end position="1707"/>
    </location>
</feature>
<feature type="topological domain" description="Extracellular" evidence="3">
    <location>
        <begin position="1"/>
        <end position="767"/>
    </location>
</feature>
<feature type="transmembrane region" description="Helical; Name=1" evidence="3">
    <location>
        <begin position="768"/>
        <end position="788"/>
    </location>
</feature>
<feature type="topological domain" description="Cytoplasmic" evidence="3">
    <location>
        <begin position="789"/>
        <end position="801"/>
    </location>
</feature>
<feature type="transmembrane region" description="Helical; Name=2" evidence="3">
    <location>
        <begin position="802"/>
        <end position="822"/>
    </location>
</feature>
<feature type="topological domain" description="Extracellular" evidence="3">
    <location>
        <begin position="823"/>
        <end position="828"/>
    </location>
</feature>
<feature type="transmembrane region" description="Helical; Name=3" evidence="3">
    <location>
        <begin position="829"/>
        <end position="849"/>
    </location>
</feature>
<feature type="topological domain" description="Cytoplasmic" evidence="3">
    <location>
        <begin position="850"/>
        <end position="875"/>
    </location>
</feature>
<feature type="transmembrane region" description="Helical; Name=4" evidence="3">
    <location>
        <begin position="876"/>
        <end position="896"/>
    </location>
</feature>
<feature type="topological domain" description="Extracellular" evidence="3">
    <location>
        <begin position="897"/>
        <end position="920"/>
    </location>
</feature>
<feature type="transmembrane region" description="Helical; Name=5" evidence="3">
    <location>
        <begin position="921"/>
        <end position="941"/>
    </location>
</feature>
<feature type="topological domain" description="Cytoplasmic" evidence="3">
    <location>
        <begin position="942"/>
        <end position="968"/>
    </location>
</feature>
<feature type="transmembrane region" description="Helical; Name=6" evidence="3">
    <location>
        <begin position="969"/>
        <end position="989"/>
    </location>
</feature>
<feature type="topological domain" description="Extracellular" evidence="3">
    <location>
        <begin position="990"/>
        <end position="999"/>
    </location>
</feature>
<feature type="transmembrane region" description="Helical; Name=7" evidence="3">
    <location>
        <begin position="1000"/>
        <end position="1020"/>
    </location>
</feature>
<feature type="topological domain" description="Cytoplasmic" evidence="3">
    <location>
        <begin position="1021"/>
        <end position="1707"/>
    </location>
</feature>
<feature type="domain" description="SUEL-type lectin" evidence="5">
    <location>
        <begin position="25"/>
        <end position="114"/>
    </location>
</feature>
<feature type="domain" description="GAIN-B" evidence="4">
    <location>
        <begin position="561"/>
        <end position="754"/>
    </location>
</feature>
<feature type="region of interest" description="Disordered" evidence="6">
    <location>
        <begin position="176"/>
        <end position="301"/>
    </location>
</feature>
<feature type="region of interest" description="Disordered" evidence="6">
    <location>
        <begin position="376"/>
        <end position="400"/>
    </location>
</feature>
<feature type="region of interest" description="GPS" evidence="4">
    <location>
        <begin position="709"/>
        <end position="754"/>
    </location>
</feature>
<feature type="region of interest" description="Disordered" evidence="6">
    <location>
        <begin position="1169"/>
        <end position="1188"/>
    </location>
</feature>
<feature type="region of interest" description="Disordered" evidence="6">
    <location>
        <begin position="1236"/>
        <end position="1260"/>
    </location>
</feature>
<feature type="region of interest" description="Disordered" evidence="6">
    <location>
        <begin position="1316"/>
        <end position="1335"/>
    </location>
</feature>
<feature type="region of interest" description="Disordered" evidence="6">
    <location>
        <begin position="1450"/>
        <end position="1538"/>
    </location>
</feature>
<feature type="region of interest" description="Disordered" evidence="6">
    <location>
        <begin position="1563"/>
        <end position="1582"/>
    </location>
</feature>
<feature type="region of interest" description="Disordered" evidence="6">
    <location>
        <begin position="1612"/>
        <end position="1687"/>
    </location>
</feature>
<feature type="compositionally biased region" description="Polar residues" evidence="6">
    <location>
        <begin position="185"/>
        <end position="198"/>
    </location>
</feature>
<feature type="compositionally biased region" description="Polar residues" evidence="6">
    <location>
        <begin position="256"/>
        <end position="265"/>
    </location>
</feature>
<feature type="compositionally biased region" description="Low complexity" evidence="6">
    <location>
        <begin position="275"/>
        <end position="285"/>
    </location>
</feature>
<feature type="compositionally biased region" description="Low complexity" evidence="6">
    <location>
        <begin position="1172"/>
        <end position="1181"/>
    </location>
</feature>
<feature type="compositionally biased region" description="Low complexity" evidence="6">
    <location>
        <begin position="1316"/>
        <end position="1326"/>
    </location>
</feature>
<feature type="compositionally biased region" description="Low complexity" evidence="6">
    <location>
        <begin position="1456"/>
        <end position="1481"/>
    </location>
</feature>
<feature type="compositionally biased region" description="Acidic residues" evidence="6">
    <location>
        <begin position="1489"/>
        <end position="1503"/>
    </location>
</feature>
<feature type="compositionally biased region" description="Acidic residues" evidence="6">
    <location>
        <begin position="1513"/>
        <end position="1526"/>
    </location>
</feature>
<feature type="compositionally biased region" description="Polar residues" evidence="6">
    <location>
        <begin position="1635"/>
        <end position="1650"/>
    </location>
</feature>
<feature type="compositionally biased region" description="Low complexity" evidence="6">
    <location>
        <begin position="1651"/>
        <end position="1673"/>
    </location>
</feature>
<feature type="compositionally biased region" description="Basic residues" evidence="6">
    <location>
        <begin position="1674"/>
        <end position="1686"/>
    </location>
</feature>
<feature type="site" description="Cleavage; by autolysis" evidence="4">
    <location>
        <begin position="741"/>
        <end position="742"/>
    </location>
</feature>
<feature type="modified residue" description="Phosphoserine" evidence="1">
    <location>
        <position position="1156"/>
    </location>
</feature>
<feature type="modified residue" description="Phosphoserine" evidence="1">
    <location>
        <position position="1255"/>
    </location>
</feature>
<feature type="modified residue" description="Phosphoserine" evidence="1">
    <location>
        <position position="1262"/>
    </location>
</feature>
<feature type="modified residue" description="Phosphoserine" evidence="1">
    <location>
        <position position="1327"/>
    </location>
</feature>
<feature type="modified residue" description="Phosphoserine" evidence="1">
    <location>
        <position position="1328"/>
    </location>
</feature>
<feature type="glycosylation site" description="N-linked (GlcNAc...) asparagine" evidence="3">
    <location>
        <position position="142"/>
    </location>
</feature>
<feature type="glycosylation site" description="N-linked (GlcNAc...) asparagine" evidence="3">
    <location>
        <position position="256"/>
    </location>
</feature>
<feature type="glycosylation site" description="N-linked (GlcNAc...) asparagine" evidence="3">
    <location>
        <position position="302"/>
    </location>
</feature>
<feature type="glycosylation site" description="N-linked (GlcNAc...) asparagine" evidence="3">
    <location>
        <position position="341"/>
    </location>
</feature>
<feature type="glycosylation site" description="N-linked (GlcNAc...) asparagine" evidence="3">
    <location>
        <position position="398"/>
    </location>
</feature>
<feature type="glycosylation site" description="N-linked (GlcNAc...) asparagine" evidence="3">
    <location>
        <position position="655"/>
    </location>
</feature>
<feature type="glycosylation site" description="N-linked (GlcNAc...) asparagine" evidence="3">
    <location>
        <position position="703"/>
    </location>
</feature>
<feature type="glycosylation site" description="N-linked (GlcNAc...) asparagine" evidence="3">
    <location>
        <position position="730"/>
    </location>
</feature>
<feature type="disulfide bond" evidence="4">
    <location>
        <begin position="709"/>
        <end position="736"/>
    </location>
</feature>
<feature type="disulfide bond" evidence="4">
    <location>
        <begin position="724"/>
        <end position="738"/>
    </location>
</feature>
<comment type="subunit">
    <text evidence="2">Forms a heterodimer, consisting of a large extracellular region non-covalently linked to a seven-transmembrane moiety.</text>
</comment>
<comment type="subcellular location">
    <subcellularLocation>
        <location evidence="3">Cell membrane</location>
        <topology evidence="2 3">Multi-pass membrane protein</topology>
    </subcellularLocation>
</comment>
<comment type="PTM">
    <text evidence="2">Proteolytically cleaved into 2 subunits, an extracellular subunit and a seven-transmembrane subunit.</text>
</comment>
<comment type="similarity">
    <text evidence="3">Belongs to the G-protein coupled receptor 2 family. LN-TM7 subfamily.</text>
</comment>
<dbReference type="EMBL" id="CM000157">
    <property type="protein sequence ID" value="EDW89373.1"/>
    <property type="molecule type" value="Genomic_DNA"/>
</dbReference>
<dbReference type="SMR" id="B4P3A0"/>
<dbReference type="MEROPS" id="P02.A01"/>
<dbReference type="GlyCosmos" id="B4P3A0">
    <property type="glycosylation" value="8 sites, No reported glycans"/>
</dbReference>
<dbReference type="GeneID" id="6528618"/>
<dbReference type="KEGG" id="dya:Dyak_GE19213"/>
<dbReference type="CTD" id="35846"/>
<dbReference type="eggNOG" id="KOG4193">
    <property type="taxonomic scope" value="Eukaryota"/>
</dbReference>
<dbReference type="eggNOG" id="KOG4729">
    <property type="taxonomic scope" value="Eukaryota"/>
</dbReference>
<dbReference type="HOGENOM" id="CLU_003272_0_0_1"/>
<dbReference type="OMA" id="NMRVFIY"/>
<dbReference type="OrthoDB" id="1100386at2759"/>
<dbReference type="PhylomeDB" id="B4P3A0"/>
<dbReference type="ChiTaRS" id="Cirl">
    <property type="organism name" value="fly"/>
</dbReference>
<dbReference type="Proteomes" id="UP000002282">
    <property type="component" value="Chromosome 2L"/>
</dbReference>
<dbReference type="GO" id="GO:0005886">
    <property type="term" value="C:plasma membrane"/>
    <property type="evidence" value="ECO:0007669"/>
    <property type="project" value="UniProtKB-SubCell"/>
</dbReference>
<dbReference type="GO" id="GO:0030246">
    <property type="term" value="F:carbohydrate binding"/>
    <property type="evidence" value="ECO:0007669"/>
    <property type="project" value="UniProtKB-KW"/>
</dbReference>
<dbReference type="GO" id="GO:0004930">
    <property type="term" value="F:G protein-coupled receptor activity"/>
    <property type="evidence" value="ECO:0007669"/>
    <property type="project" value="UniProtKB-KW"/>
</dbReference>
<dbReference type="GO" id="GO:0140897">
    <property type="term" value="F:mechanoreceptor activity"/>
    <property type="evidence" value="ECO:0007669"/>
    <property type="project" value="EnsemblMetazoa"/>
</dbReference>
<dbReference type="GO" id="GO:0008344">
    <property type="term" value="P:adult locomotory behavior"/>
    <property type="evidence" value="ECO:0007669"/>
    <property type="project" value="EnsemblMetazoa"/>
</dbReference>
<dbReference type="GO" id="GO:0007166">
    <property type="term" value="P:cell surface receptor signaling pathway"/>
    <property type="evidence" value="ECO:0007669"/>
    <property type="project" value="InterPro"/>
</dbReference>
<dbReference type="GO" id="GO:0019230">
    <property type="term" value="P:proprioception"/>
    <property type="evidence" value="ECO:0007669"/>
    <property type="project" value="EnsemblMetazoa"/>
</dbReference>
<dbReference type="CDD" id="cd15441">
    <property type="entry name" value="7tmB2_CELSR_Adhesion_IV"/>
    <property type="match status" value="1"/>
</dbReference>
<dbReference type="CDD" id="cd22830">
    <property type="entry name" value="Gal_Rha_Lectin_dCirl"/>
    <property type="match status" value="1"/>
</dbReference>
<dbReference type="FunFam" id="2.60.120.740:FF:000001">
    <property type="entry name" value="Adhesion G protein-coupled receptor L2"/>
    <property type="match status" value="1"/>
</dbReference>
<dbReference type="FunFam" id="1.20.1070.10:FF:000322">
    <property type="entry name" value="latrophilin Cirl isoform X2"/>
    <property type="match status" value="1"/>
</dbReference>
<dbReference type="FunFam" id="1.25.40.610:FF:000006">
    <property type="entry name" value="latrophilin Cirl isoform X2"/>
    <property type="match status" value="1"/>
</dbReference>
<dbReference type="FunFam" id="2.60.220.50:FF:000024">
    <property type="entry name" value="latrophilin Cirl isoform X2"/>
    <property type="match status" value="1"/>
</dbReference>
<dbReference type="Gene3D" id="1.25.40.610">
    <property type="match status" value="1"/>
</dbReference>
<dbReference type="Gene3D" id="2.60.120.740">
    <property type="match status" value="1"/>
</dbReference>
<dbReference type="Gene3D" id="2.60.220.50">
    <property type="match status" value="1"/>
</dbReference>
<dbReference type="Gene3D" id="4.10.1240.10">
    <property type="entry name" value="GPCR, family 2, extracellular hormone receptor domain"/>
    <property type="match status" value="1"/>
</dbReference>
<dbReference type="Gene3D" id="1.20.1070.10">
    <property type="entry name" value="Rhodopsin 7-helix transmembrane proteins"/>
    <property type="match status" value="1"/>
</dbReference>
<dbReference type="InterPro" id="IPR057244">
    <property type="entry name" value="GAIN_B"/>
</dbReference>
<dbReference type="InterPro" id="IPR032471">
    <property type="entry name" value="GAIN_dom_N"/>
</dbReference>
<dbReference type="InterPro" id="IPR046338">
    <property type="entry name" value="GAIN_dom_sf"/>
</dbReference>
<dbReference type="InterPro" id="IPR017981">
    <property type="entry name" value="GPCR_2-like_7TM"/>
</dbReference>
<dbReference type="InterPro" id="IPR036445">
    <property type="entry name" value="GPCR_2_extracell_dom_sf"/>
</dbReference>
<dbReference type="InterPro" id="IPR000832">
    <property type="entry name" value="GPCR_2_secretin-like"/>
</dbReference>
<dbReference type="InterPro" id="IPR000203">
    <property type="entry name" value="GPS"/>
</dbReference>
<dbReference type="InterPro" id="IPR000922">
    <property type="entry name" value="Lectin_gal-bd_dom"/>
</dbReference>
<dbReference type="InterPro" id="IPR043159">
    <property type="entry name" value="Lectin_gal-bd_sf"/>
</dbReference>
<dbReference type="PANTHER" id="PTHR12011">
    <property type="entry name" value="ADHESION G-PROTEIN COUPLED RECEPTOR"/>
    <property type="match status" value="1"/>
</dbReference>
<dbReference type="PANTHER" id="PTHR12011:SF475">
    <property type="entry name" value="LATROPHILIN CIRL"/>
    <property type="match status" value="1"/>
</dbReference>
<dbReference type="Pfam" id="PF00002">
    <property type="entry name" value="7tm_2"/>
    <property type="match status" value="1"/>
</dbReference>
<dbReference type="Pfam" id="PF16489">
    <property type="entry name" value="GAIN"/>
    <property type="match status" value="1"/>
</dbReference>
<dbReference type="Pfam" id="PF01825">
    <property type="entry name" value="GPS"/>
    <property type="match status" value="1"/>
</dbReference>
<dbReference type="Pfam" id="PF02140">
    <property type="entry name" value="SUEL_Lectin"/>
    <property type="match status" value="1"/>
</dbReference>
<dbReference type="SMART" id="SM00303">
    <property type="entry name" value="GPS"/>
    <property type="match status" value="1"/>
</dbReference>
<dbReference type="SUPFAM" id="SSF81321">
    <property type="entry name" value="Family A G protein-coupled receptor-like"/>
    <property type="match status" value="1"/>
</dbReference>
<dbReference type="PROSITE" id="PS50261">
    <property type="entry name" value="G_PROTEIN_RECEP_F2_4"/>
    <property type="match status" value="1"/>
</dbReference>
<dbReference type="PROSITE" id="PS50221">
    <property type="entry name" value="GAIN_B"/>
    <property type="match status" value="1"/>
</dbReference>
<dbReference type="PROSITE" id="PS50228">
    <property type="entry name" value="SUEL_LECTIN"/>
    <property type="match status" value="1"/>
</dbReference>
<sequence>MLPTILSISYEHTYAYLSKYQTAYACEGKKLTIECEPGDVINLIRANYGRFSITICNDHGNVEWSVNCMFPKSLSVLNSRCAHKQSCGVLAATSMFGDPCPGTHKYLEAHYQCISAAQTSTTTNRPSPPPWVLSNGPPIFGNGSGLIHPPGVGAGAPPPPRLPTLPGVVGISGNPGLFNVPPQHTAVTHSTPSSSTTAVGGGRLKGVPTSTTTTKHPAGRHDGLPPPPQLHHHHNHHGDDTATPTKPSSKLPAGGNATSPSNTRILTGVGGSGTDDGTLLTTKSSPNRPPGTAASGAVVPGNGSVVRTINNINLNAAGISGGDDESKLFCGPTHARNLYWNMTRVGDVNVQPCPGGAAGIAKWRCVLMKRMPDSGYDEYDDDPSSTTPAPNGGDCLHNSSSCEPPVSMAHKVNQRLRNFEPTWHPATPDLTQCRSLWLNNLEMRVNQRDSSLISIANDMSEVTSSKTLYGGDMLVTTKIIQTVSEKMLHDKETFPDQRQREAMIMELLHCVVKTGSNLLDESQLSSWLDLNPEDQMRVATSLLTGLEYNAFLLADTIIRERSVVQKVKNILLSVRVLETKTIQSSVVFPDSDQWPLSSDRIELPRAALIDNSEGGLVRIVFAAFDRLESILKPSYDHFDLKSSRSYVRNTAILSNDSDVNAGEIQQRLRILNSKVISASLGKGRHIQLSQPITLTLKHLKTENVTNPTCVFWNYIDHAWSANGCSLESTNRTHSVCSCNHLTNFAILMDVVDEHQHSLFTMFDGNMRIFIYISIGICVVFIVIALLTLKLFNGVFVKSARTSIYTSIYLCLLAIELLFLLGIEQTETSIFCGFITIFLHCAILSGTAWFCYEAFHSYSTLTSDELLLEVDQTPKVNCYYLLSYGLSLSVVAISLVIDPSTYTQNDYCVLMEANALFYATFVIPVLVFFVAAIGYTFLSWIILCRKSRTGLKTKEHTRLASVRFDIRCSFVFLLLLSAVWCSSYFYLRGAKMDDDTADVYGYCFICFNTLLGLYIFVFHCIQNEKIRREYRKYVRQHAWLPKCLRCSKTSISSGIVTGNGPTAGTLCSVSTSKKPKLPLGVSEEAHDDPQQQQHTPVPITEDAIMGASSDCELNEAQQRRTLKSGLMTGTLQAPPQTLGGHVVLERGSTLRSTGHASPTSSAGSTHLIFAHKQQQQQQQQQQGPLGEGYYHQPDYYSWKQPPTGTGGLKTPREYYNNTGASASSPQQAHEVFYWTQKPNSGQHGKKKRGAGGVPASPSGSLHSRTAAASQVLFYPSYKKTKAGQPTGYPQYAEALDPPLATGNAAAYYQQQQQLRRQQLHQQQQQQLSSDEEQVEQHAHLLHLQRRAGSQQQLPAPPPHMAQYQHEFMQRQYRNKHSNCDLGMGDAYYNQGSVGGADGGPVYEEILSNRNSDVQHYEVGDFDVDEVYNNSVGTGVFNNMRAAVAAGGSRYGGGSLSGGSVSSRSQQQQLKKQQQQQSLAQQRSARRCTADDDDDEEEEEDEEATAAEQLHDSVCDEDEEEDESDLEDDAHGLPPQSDERMRRLMAMQDEDFKRRFQRQLRKHGAPLDYGALPPGSGPQPEHNGAVFGVSGGVGEGSMRGAFRQQQALNAKSPGGRLAVNDLFGHGNSGPPLPPANQTPAQKRQQLQKLSPQSTTSSSSHTSHSNPNPHPLQLTHPHPHQHPPHHQQRHLSAMLDENNTVRCYLEPLAK</sequence>
<reference evidence="7" key="1">
    <citation type="journal article" date="2007" name="Nature">
        <title>Evolution of genes and genomes on the Drosophila phylogeny.</title>
        <authorList>
            <consortium name="Drosophila 12 genomes consortium"/>
        </authorList>
    </citation>
    <scope>NUCLEOTIDE SEQUENCE [LARGE SCALE GENOMIC DNA]</scope>
    <source>
        <strain evidence="7">Tai18E2 / Tucson 14021-0261.01</strain>
    </source>
</reference>